<comment type="function">
    <text evidence="1">E1 component of the 2-oxoglutarate dehydrogenase (OGDH) complex which catalyzes the decarboxylation of 2-oxoglutarate, the first step in the conversion of 2-oxoglutarate to succinyl-CoA and CO(2).</text>
</comment>
<comment type="catalytic activity">
    <reaction evidence="1">
        <text>N(6)-[(R)-lipoyl]-L-lysyl-[protein] + 2-oxoglutarate + H(+) = N(6)-[(R)-S(8)-succinyldihydrolipoyl]-L-lysyl-[protein] + CO2</text>
        <dbReference type="Rhea" id="RHEA:12188"/>
        <dbReference type="Rhea" id="RHEA-COMP:10474"/>
        <dbReference type="Rhea" id="RHEA-COMP:20092"/>
        <dbReference type="ChEBI" id="CHEBI:15378"/>
        <dbReference type="ChEBI" id="CHEBI:16526"/>
        <dbReference type="ChEBI" id="CHEBI:16810"/>
        <dbReference type="ChEBI" id="CHEBI:83099"/>
        <dbReference type="ChEBI" id="CHEBI:83120"/>
        <dbReference type="EC" id="1.2.4.2"/>
    </reaction>
</comment>
<comment type="cofactor">
    <cofactor evidence="1">
        <name>thiamine diphosphate</name>
        <dbReference type="ChEBI" id="CHEBI:58937"/>
    </cofactor>
</comment>
<comment type="subunit">
    <text evidence="1">Homodimer. Part of the 2-oxoglutarate dehydrogenase (OGDH) complex composed of E1 (2-oxoglutarate dehydrogenase), E2 (dihydrolipoamide succinyltransferase) and E3 (dihydrolipoamide dehydrogenase); the complex contains multiple copies of the three enzymatic components (E1, E2 and E3).</text>
</comment>
<comment type="similarity">
    <text evidence="2">Belongs to the alpha-ketoglutarate dehydrogenase family.</text>
</comment>
<proteinExistence type="inferred from homology"/>
<sequence length="916" mass="106047">MYKNEFNSSWMSSFNSSYIDNLYNKFLLDPTSIDNSWYIVFTELSKENYINSTNKYLNNKFQDSKDTIKLTIELLINIFRTLGYKFAHLNPLDTFKNDNSLSLKKFLKSSEAFRIQDSYLVKLSQYVLDDITTKNVYDDYKNIYCKRIGYQFMHIHNSNEMNWIKNYIETKHSNILKKKKKIQILKHLIISEMLEKYFSSKFPSIKRFSIEGAESLIPMLKEVIKYTKKFNLHKIIFGMSHRGRLNVLANILDKPIKTIFNEFCENNSNNFNSGDVKYHMGFCCTKTIGLRKIILDLKSNPSHLEVINPVVVGSSRAYIDSNDNLNDENILPIIIHGDAAISGQGVVQELLNMSQARGYKVGGTIHIVVNNQIGFTTSKVKDLRTSQYCTDIAKMIDSPIFHVNADDPESVIFVTHLALNYRFCFKKDVFINLVCYRRHGHNEIDDPSITQPVLYSKIKNHPTTATSYYNKLLLKNIINKSFLITYQKKIKKKLDVEYNLHNKKMSEKRLKCCSIVKADYINVSNTPINNISQSDLTILAKKIFSIPNNIEVHNRVFKIYKDRLKMANNEKLFDWGASELLAYASLLNEGISCRLSGEDVCRGTFFHRHAVIHDQKNDSKYIPLKNIKLKQGNFYIWDSVLSEEATLAFEYGYSIDQKNTLNVWEAQFGDFANGAQIIIDQFICSGEQKWNVTCNLVMLLPHGYEGQGPEHSSARIERYLQLSANNNIKIIIPTISSQIYHIIRKQAFSLIKKPLIIMSPKSLLRFPLAASSLSELSNGKFRTVIDEIDNLDTKKVQRIILCSGKIYYDLLTQRRINQQKNIVILRIEQIYPRPTKKLSAILYNYKDVHDYIWCQEEPCNQGAWLYHKSYLKKLLPKHSKLNYVGRSSSASPATGYMKIHKEQQKKIIYDALNISD</sequence>
<protein>
    <recommendedName>
        <fullName>Oxoglutarate dehydrogenase</fullName>
        <ecNumber evidence="1">1.2.4.2</ecNumber>
    </recommendedName>
</protein>
<reference key="1">
    <citation type="journal article" date="2003" name="Proc. Natl. Acad. Sci. U.S.A.">
        <title>Reductive genome evolution in Buchnera aphidicola.</title>
        <authorList>
            <person name="van Ham R.C.H.J."/>
            <person name="Kamerbeek J."/>
            <person name="Palacios C."/>
            <person name="Rausell C."/>
            <person name="Abascal F."/>
            <person name="Bastolla U."/>
            <person name="Fernandez J.M."/>
            <person name="Jimenez L."/>
            <person name="Postigo M."/>
            <person name="Silva F.J."/>
            <person name="Tamames J."/>
            <person name="Viguera E."/>
            <person name="Latorre A."/>
            <person name="Valencia A."/>
            <person name="Moran F."/>
            <person name="Moya A."/>
        </authorList>
    </citation>
    <scope>NUCLEOTIDE SEQUENCE [LARGE SCALE GENOMIC DNA]</scope>
    <source>
        <strain>Bp</strain>
    </source>
</reference>
<feature type="chain" id="PRO_0000162189" description="Oxoglutarate dehydrogenase">
    <location>
        <begin position="1"/>
        <end position="916"/>
    </location>
</feature>
<keyword id="KW-0324">Glycolysis</keyword>
<keyword id="KW-0560">Oxidoreductase</keyword>
<keyword id="KW-1185">Reference proteome</keyword>
<keyword id="KW-0786">Thiamine pyrophosphate</keyword>
<evidence type="ECO:0000250" key="1">
    <source>
        <dbReference type="UniProtKB" id="P0AFG3"/>
    </source>
</evidence>
<evidence type="ECO:0000305" key="2"/>
<organism>
    <name type="scientific">Buchnera aphidicola subsp. Baizongia pistaciae (strain Bp)</name>
    <dbReference type="NCBI Taxonomy" id="224915"/>
    <lineage>
        <taxon>Bacteria</taxon>
        <taxon>Pseudomonadati</taxon>
        <taxon>Pseudomonadota</taxon>
        <taxon>Gammaproteobacteria</taxon>
        <taxon>Enterobacterales</taxon>
        <taxon>Erwiniaceae</taxon>
        <taxon>Buchnera</taxon>
    </lineage>
</organism>
<name>ODO1_BUCBP</name>
<gene>
    <name type="primary">sucA</name>
    <name type="ordered locus">bbp_280</name>
</gene>
<dbReference type="EC" id="1.2.4.2" evidence="1"/>
<dbReference type="EMBL" id="AE016826">
    <property type="protein sequence ID" value="AAO27005.1"/>
    <property type="molecule type" value="Genomic_DNA"/>
</dbReference>
<dbReference type="RefSeq" id="WP_011091406.1">
    <property type="nucleotide sequence ID" value="NC_004545.1"/>
</dbReference>
<dbReference type="SMR" id="Q89AJ7"/>
<dbReference type="STRING" id="224915.bbp_280"/>
<dbReference type="KEGG" id="bab:bbp_280"/>
<dbReference type="eggNOG" id="COG0567">
    <property type="taxonomic scope" value="Bacteria"/>
</dbReference>
<dbReference type="HOGENOM" id="CLU_004709_1_0_6"/>
<dbReference type="OrthoDB" id="9759785at2"/>
<dbReference type="Proteomes" id="UP000000601">
    <property type="component" value="Chromosome"/>
</dbReference>
<dbReference type="GO" id="GO:0005829">
    <property type="term" value="C:cytosol"/>
    <property type="evidence" value="ECO:0007669"/>
    <property type="project" value="TreeGrafter"/>
</dbReference>
<dbReference type="GO" id="GO:0045252">
    <property type="term" value="C:oxoglutarate dehydrogenase complex"/>
    <property type="evidence" value="ECO:0007669"/>
    <property type="project" value="TreeGrafter"/>
</dbReference>
<dbReference type="GO" id="GO:0004591">
    <property type="term" value="F:oxoglutarate dehydrogenase (succinyl-transferring) activity"/>
    <property type="evidence" value="ECO:0007669"/>
    <property type="project" value="UniProtKB-EC"/>
</dbReference>
<dbReference type="GO" id="GO:0030976">
    <property type="term" value="F:thiamine pyrophosphate binding"/>
    <property type="evidence" value="ECO:0007669"/>
    <property type="project" value="InterPro"/>
</dbReference>
<dbReference type="GO" id="GO:0006096">
    <property type="term" value="P:glycolytic process"/>
    <property type="evidence" value="ECO:0007669"/>
    <property type="project" value="UniProtKB-KW"/>
</dbReference>
<dbReference type="GO" id="GO:0006099">
    <property type="term" value="P:tricarboxylic acid cycle"/>
    <property type="evidence" value="ECO:0007669"/>
    <property type="project" value="TreeGrafter"/>
</dbReference>
<dbReference type="CDD" id="cd02016">
    <property type="entry name" value="TPP_E1_OGDC_like"/>
    <property type="match status" value="1"/>
</dbReference>
<dbReference type="Gene3D" id="3.40.50.12470">
    <property type="match status" value="1"/>
</dbReference>
<dbReference type="Gene3D" id="3.40.50.970">
    <property type="match status" value="1"/>
</dbReference>
<dbReference type="Gene3D" id="3.40.50.11610">
    <property type="entry name" value="Multifunctional 2-oxoglutarate metabolism enzyme, C-terminal domain"/>
    <property type="match status" value="1"/>
</dbReference>
<dbReference type="InterPro" id="IPR032106">
    <property type="entry name" value="2-oxogl_dehyd_N"/>
</dbReference>
<dbReference type="InterPro" id="IPR011603">
    <property type="entry name" value="2oxoglutarate_DH_E1"/>
</dbReference>
<dbReference type="InterPro" id="IPR001017">
    <property type="entry name" value="DH_E1"/>
</dbReference>
<dbReference type="InterPro" id="IPR042179">
    <property type="entry name" value="KGD_C_sf"/>
</dbReference>
<dbReference type="InterPro" id="IPR031717">
    <property type="entry name" value="ODO-1/KGD_C"/>
</dbReference>
<dbReference type="InterPro" id="IPR029061">
    <property type="entry name" value="THDP-binding"/>
</dbReference>
<dbReference type="InterPro" id="IPR005475">
    <property type="entry name" value="Transketolase-like_Pyr-bd"/>
</dbReference>
<dbReference type="NCBIfam" id="TIGR00239">
    <property type="entry name" value="2oxo_dh_E1"/>
    <property type="match status" value="1"/>
</dbReference>
<dbReference type="NCBIfam" id="NF006914">
    <property type="entry name" value="PRK09404.1"/>
    <property type="match status" value="1"/>
</dbReference>
<dbReference type="NCBIfam" id="NF008907">
    <property type="entry name" value="PRK12270.1"/>
    <property type="match status" value="1"/>
</dbReference>
<dbReference type="PANTHER" id="PTHR23152:SF4">
    <property type="entry name" value="2-OXOADIPATE DEHYDROGENASE COMPLEX COMPONENT E1"/>
    <property type="match status" value="1"/>
</dbReference>
<dbReference type="PANTHER" id="PTHR23152">
    <property type="entry name" value="2-OXOGLUTARATE DEHYDROGENASE"/>
    <property type="match status" value="1"/>
</dbReference>
<dbReference type="Pfam" id="PF16078">
    <property type="entry name" value="2-oxogl_dehyd_N"/>
    <property type="match status" value="1"/>
</dbReference>
<dbReference type="Pfam" id="PF00676">
    <property type="entry name" value="E1_dh"/>
    <property type="match status" value="1"/>
</dbReference>
<dbReference type="Pfam" id="PF16870">
    <property type="entry name" value="OxoGdeHyase_C"/>
    <property type="match status" value="1"/>
</dbReference>
<dbReference type="Pfam" id="PF02779">
    <property type="entry name" value="Transket_pyr"/>
    <property type="match status" value="1"/>
</dbReference>
<dbReference type="PIRSF" id="PIRSF000157">
    <property type="entry name" value="Oxoglu_dh_E1"/>
    <property type="match status" value="1"/>
</dbReference>
<dbReference type="SMART" id="SM00861">
    <property type="entry name" value="Transket_pyr"/>
    <property type="match status" value="1"/>
</dbReference>
<dbReference type="SUPFAM" id="SSF52518">
    <property type="entry name" value="Thiamin diphosphate-binding fold (THDP-binding)"/>
    <property type="match status" value="2"/>
</dbReference>
<accession>Q89AJ7</accession>